<keyword id="KW-0963">Cytoplasm</keyword>
<keyword id="KW-0648">Protein biosynthesis</keyword>
<organism>
    <name type="scientific">Staphylococcus aureus (strain MW2)</name>
    <dbReference type="NCBI Taxonomy" id="196620"/>
    <lineage>
        <taxon>Bacteria</taxon>
        <taxon>Bacillati</taxon>
        <taxon>Bacillota</taxon>
        <taxon>Bacilli</taxon>
        <taxon>Bacillales</taxon>
        <taxon>Staphylococcaceae</taxon>
        <taxon>Staphylococcus</taxon>
    </lineage>
</organism>
<protein>
    <recommendedName>
        <fullName evidence="1">Ribosome-recycling factor</fullName>
        <shortName evidence="1">RRF</shortName>
    </recommendedName>
    <alternativeName>
        <fullName evidence="1">Ribosome-releasing factor</fullName>
    </alternativeName>
</protein>
<reference key="1">
    <citation type="journal article" date="2002" name="Lancet">
        <title>Genome and virulence determinants of high virulence community-acquired MRSA.</title>
        <authorList>
            <person name="Baba T."/>
            <person name="Takeuchi F."/>
            <person name="Kuroda M."/>
            <person name="Yuzawa H."/>
            <person name="Aoki K."/>
            <person name="Oguchi A."/>
            <person name="Nagai Y."/>
            <person name="Iwama N."/>
            <person name="Asano K."/>
            <person name="Naimi T."/>
            <person name="Kuroda H."/>
            <person name="Cui L."/>
            <person name="Yamamoto K."/>
            <person name="Hiramatsu K."/>
        </authorList>
    </citation>
    <scope>NUCLEOTIDE SEQUENCE [LARGE SCALE GENOMIC DNA]</scope>
    <source>
        <strain>MW2</strain>
    </source>
</reference>
<sequence length="184" mass="20353">MSDIINETKSRMQKSIESLSRELANISAGRANSNLLNGVTVDYYGAPTPVQQLASINVPEARLLVISPYDKTSVADIEKAIIAANLGVNPTSDGEVIRIAVPALTEERRKERVKDVKKIGEEAKVSVRNIRRDMNDQLKKDEKNGDITEDELRSGTEDVQKATDNSIKEIDQMIADKEKDIMSV</sequence>
<feature type="chain" id="PRO_0000167544" description="Ribosome-recycling factor">
    <location>
        <begin position="1"/>
        <end position="184"/>
    </location>
</feature>
<feature type="region of interest" description="Disordered" evidence="2">
    <location>
        <begin position="134"/>
        <end position="167"/>
    </location>
</feature>
<gene>
    <name evidence="1" type="primary">frr</name>
    <name type="ordered locus">MW1142</name>
</gene>
<accession>P68787</accession>
<accession>O33276</accession>
<evidence type="ECO:0000255" key="1">
    <source>
        <dbReference type="HAMAP-Rule" id="MF_00040"/>
    </source>
</evidence>
<evidence type="ECO:0000256" key="2">
    <source>
        <dbReference type="SAM" id="MobiDB-lite"/>
    </source>
</evidence>
<name>RRF_STAAW</name>
<dbReference type="EMBL" id="BA000033">
    <property type="protein sequence ID" value="BAB95007.1"/>
    <property type="molecule type" value="Genomic_DNA"/>
</dbReference>
<dbReference type="RefSeq" id="WP_001280006.1">
    <property type="nucleotide sequence ID" value="NC_003923.1"/>
</dbReference>
<dbReference type="SMR" id="P68787"/>
<dbReference type="KEGG" id="sam:MW1142"/>
<dbReference type="HOGENOM" id="CLU_073981_2_0_9"/>
<dbReference type="GO" id="GO:0005737">
    <property type="term" value="C:cytoplasm"/>
    <property type="evidence" value="ECO:0007669"/>
    <property type="project" value="UniProtKB-SubCell"/>
</dbReference>
<dbReference type="GO" id="GO:0043023">
    <property type="term" value="F:ribosomal large subunit binding"/>
    <property type="evidence" value="ECO:0007669"/>
    <property type="project" value="TreeGrafter"/>
</dbReference>
<dbReference type="GO" id="GO:0006415">
    <property type="term" value="P:translational termination"/>
    <property type="evidence" value="ECO:0007669"/>
    <property type="project" value="UniProtKB-UniRule"/>
</dbReference>
<dbReference type="CDD" id="cd00520">
    <property type="entry name" value="RRF"/>
    <property type="match status" value="1"/>
</dbReference>
<dbReference type="FunFam" id="1.10.132.20:FF:000001">
    <property type="entry name" value="Ribosome-recycling factor"/>
    <property type="match status" value="1"/>
</dbReference>
<dbReference type="FunFam" id="3.30.1360.40:FF:000001">
    <property type="entry name" value="Ribosome-recycling factor"/>
    <property type="match status" value="1"/>
</dbReference>
<dbReference type="Gene3D" id="3.30.1360.40">
    <property type="match status" value="1"/>
</dbReference>
<dbReference type="Gene3D" id="1.10.132.20">
    <property type="entry name" value="Ribosome-recycling factor"/>
    <property type="match status" value="1"/>
</dbReference>
<dbReference type="HAMAP" id="MF_00040">
    <property type="entry name" value="RRF"/>
    <property type="match status" value="1"/>
</dbReference>
<dbReference type="InterPro" id="IPR002661">
    <property type="entry name" value="Ribosome_recyc_fac"/>
</dbReference>
<dbReference type="InterPro" id="IPR023584">
    <property type="entry name" value="Ribosome_recyc_fac_dom"/>
</dbReference>
<dbReference type="InterPro" id="IPR036191">
    <property type="entry name" value="RRF_sf"/>
</dbReference>
<dbReference type="NCBIfam" id="TIGR00496">
    <property type="entry name" value="frr"/>
    <property type="match status" value="1"/>
</dbReference>
<dbReference type="PANTHER" id="PTHR20982:SF3">
    <property type="entry name" value="MITOCHONDRIAL RIBOSOME RECYCLING FACTOR PSEUDO 1"/>
    <property type="match status" value="1"/>
</dbReference>
<dbReference type="PANTHER" id="PTHR20982">
    <property type="entry name" value="RIBOSOME RECYCLING FACTOR"/>
    <property type="match status" value="1"/>
</dbReference>
<dbReference type="Pfam" id="PF01765">
    <property type="entry name" value="RRF"/>
    <property type="match status" value="1"/>
</dbReference>
<dbReference type="SUPFAM" id="SSF55194">
    <property type="entry name" value="Ribosome recycling factor, RRF"/>
    <property type="match status" value="1"/>
</dbReference>
<comment type="function">
    <text evidence="1">Responsible for the release of ribosomes from messenger RNA at the termination of protein biosynthesis. May increase the efficiency of translation by recycling ribosomes from one round of translation to another.</text>
</comment>
<comment type="subcellular location">
    <subcellularLocation>
        <location evidence="1">Cytoplasm</location>
    </subcellularLocation>
</comment>
<comment type="similarity">
    <text evidence="1">Belongs to the RRF family.</text>
</comment>
<proteinExistence type="inferred from homology"/>